<keyword id="KW-1185">Reference proteome</keyword>
<keyword id="KW-0784">Thiamine biosynthesis</keyword>
<reference key="1">
    <citation type="journal article" date="1995" name="Science">
        <title>Whole-genome random sequencing and assembly of Haemophilus influenzae Rd.</title>
        <authorList>
            <person name="Fleischmann R.D."/>
            <person name="Adams M.D."/>
            <person name="White O."/>
            <person name="Clayton R.A."/>
            <person name="Kirkness E.F."/>
            <person name="Kerlavage A.R."/>
            <person name="Bult C.J."/>
            <person name="Tomb J.-F."/>
            <person name="Dougherty B.A."/>
            <person name="Merrick J.M."/>
            <person name="McKenney K."/>
            <person name="Sutton G.G."/>
            <person name="FitzHugh W."/>
            <person name="Fields C.A."/>
            <person name="Gocayne J.D."/>
            <person name="Scott J.D."/>
            <person name="Shirley R."/>
            <person name="Liu L.-I."/>
            <person name="Glodek A."/>
            <person name="Kelley J.M."/>
            <person name="Weidman J.F."/>
            <person name="Phillips C.A."/>
            <person name="Spriggs T."/>
            <person name="Hedblom E."/>
            <person name="Cotton M.D."/>
            <person name="Utterback T.R."/>
            <person name="Hanna M.C."/>
            <person name="Nguyen D.T."/>
            <person name="Saudek D.M."/>
            <person name="Brandon R.C."/>
            <person name="Fine L.D."/>
            <person name="Fritchman J.L."/>
            <person name="Fuhrmann J.L."/>
            <person name="Geoghagen N.S.M."/>
            <person name="Gnehm C.L."/>
            <person name="McDonald L.A."/>
            <person name="Small K.V."/>
            <person name="Fraser C.M."/>
            <person name="Smith H.O."/>
            <person name="Venter J.C."/>
        </authorList>
    </citation>
    <scope>NUCLEOTIDE SEQUENCE [LARGE SCALE GENOMIC DNA]</scope>
    <source>
        <strain>ATCC 51907 / DSM 11121 / KW20 / Rd</strain>
    </source>
</reference>
<reference key="2">
    <citation type="journal article" date="2000" name="Electrophoresis">
        <title>Two-dimensional map of the proteome of Haemophilus influenzae.</title>
        <authorList>
            <person name="Langen H."/>
            <person name="Takacs B."/>
            <person name="Evers S."/>
            <person name="Berndt P."/>
            <person name="Lahm H.W."/>
            <person name="Wipf B."/>
            <person name="Gray C."/>
            <person name="Fountoulakis M."/>
        </authorList>
    </citation>
    <scope>IDENTIFICATION BY MASS SPECTROMETRY</scope>
    <source>
        <strain>ATCC 51907 / DSM 11121 / KW20 / Rd</strain>
    </source>
</reference>
<sequence length="314" mass="34961">MKTIIRYFSFVMGLMLTLPSFAKEKISIMLDWYVNPDHAAIIVAQQKGFFEKNNLEVEIIEPADPALPPKLAAAEKVDLAVSYQPQLYQQVAEGLPLVRVGSLISNPLNSVVVLKKSNLKSLADLKGKKVGYSVSGFEDGLLDTMLHSIGLSNKDVELVNVNWSLSPSLLTGQVDAVIGAFRNFELNQLALEKQEGIAFFPEQYGVPAYDELILVANKNSVTDKKTSAFLTALEQATSYLQAHPNEAWQAFVSYKPNELNTPLNQLAWKDTLPFLANKPRQLDAKRYQQMAEFMQQKGLIPKALALKEYAVEIE</sequence>
<name>Y357_HAEIN</name>
<dbReference type="EMBL" id="L42023">
    <property type="protein sequence ID" value="AAC22016.1"/>
    <property type="molecule type" value="Genomic_DNA"/>
</dbReference>
<dbReference type="PIR" id="C64063">
    <property type="entry name" value="C64063"/>
</dbReference>
<dbReference type="RefSeq" id="NP_438519.1">
    <property type="nucleotide sequence ID" value="NC_000907.1"/>
</dbReference>
<dbReference type="SMR" id="P44658"/>
<dbReference type="STRING" id="71421.HI_0357"/>
<dbReference type="TCDB" id="3.A.1.17.3">
    <property type="family name" value="the atp-binding cassette (abc) superfamily"/>
</dbReference>
<dbReference type="EnsemblBacteria" id="AAC22016">
    <property type="protein sequence ID" value="AAC22016"/>
    <property type="gene ID" value="HI_0357"/>
</dbReference>
<dbReference type="KEGG" id="hin:HI_0357"/>
<dbReference type="PATRIC" id="fig|71421.8.peg.375"/>
<dbReference type="eggNOG" id="COG0715">
    <property type="taxonomic scope" value="Bacteria"/>
</dbReference>
<dbReference type="HOGENOM" id="CLU_028871_6_2_6"/>
<dbReference type="OrthoDB" id="5348911at2"/>
<dbReference type="PhylomeDB" id="P44658"/>
<dbReference type="BioCyc" id="HINF71421:G1GJ1-371-MONOMER"/>
<dbReference type="Proteomes" id="UP000000579">
    <property type="component" value="Chromosome"/>
</dbReference>
<dbReference type="GO" id="GO:0009228">
    <property type="term" value="P:thiamine biosynthetic process"/>
    <property type="evidence" value="ECO:0000318"/>
    <property type="project" value="GO_Central"/>
</dbReference>
<dbReference type="CDD" id="cd13651">
    <property type="entry name" value="PBP2_ThiY"/>
    <property type="match status" value="1"/>
</dbReference>
<dbReference type="Gene3D" id="3.40.190.10">
    <property type="entry name" value="Periplasmic binding protein-like II"/>
    <property type="match status" value="2"/>
</dbReference>
<dbReference type="InterPro" id="IPR027939">
    <property type="entry name" value="NMT1/THI5"/>
</dbReference>
<dbReference type="InterPro" id="IPR015168">
    <property type="entry name" value="SsuA/THI5"/>
</dbReference>
<dbReference type="PANTHER" id="PTHR31528">
    <property type="entry name" value="4-AMINO-5-HYDROXYMETHYL-2-METHYLPYRIMIDINE PHOSPHATE SYNTHASE THI11-RELATED"/>
    <property type="match status" value="1"/>
</dbReference>
<dbReference type="PANTHER" id="PTHR31528:SF3">
    <property type="entry name" value="THIAMINE BIOSYNTHESIS PROTEIN HI_0357-RELATED"/>
    <property type="match status" value="1"/>
</dbReference>
<dbReference type="Pfam" id="PF09084">
    <property type="entry name" value="NMT1"/>
    <property type="match status" value="1"/>
</dbReference>
<dbReference type="SUPFAM" id="SSF53850">
    <property type="entry name" value="Periplasmic binding protein-like II"/>
    <property type="match status" value="1"/>
</dbReference>
<proteinExistence type="evidence at protein level"/>
<feature type="chain" id="PRO_0000211625" description="Putative thiamine biosynthesis protein HI_0357">
    <location>
        <begin position="1"/>
        <end position="314"/>
    </location>
</feature>
<evidence type="ECO:0000305" key="1"/>
<comment type="function">
    <text>Probably involved in thiamine biosynthesis.</text>
</comment>
<comment type="similarity">
    <text evidence="1">Belongs to the NMT1/THI5 family.</text>
</comment>
<organism>
    <name type="scientific">Haemophilus influenzae (strain ATCC 51907 / DSM 11121 / KW20 / Rd)</name>
    <dbReference type="NCBI Taxonomy" id="71421"/>
    <lineage>
        <taxon>Bacteria</taxon>
        <taxon>Pseudomonadati</taxon>
        <taxon>Pseudomonadota</taxon>
        <taxon>Gammaproteobacteria</taxon>
        <taxon>Pasteurellales</taxon>
        <taxon>Pasteurellaceae</taxon>
        <taxon>Haemophilus</taxon>
    </lineage>
</organism>
<accession>P44658</accession>
<protein>
    <recommendedName>
        <fullName>Putative thiamine biosynthesis protein HI_0357</fullName>
    </recommendedName>
</protein>
<gene>
    <name type="ordered locus">HI_0357</name>
</gene>